<dbReference type="EC" id="2.7.4.3" evidence="1"/>
<dbReference type="EMBL" id="CP000555">
    <property type="protein sequence ID" value="ABM95443.1"/>
    <property type="molecule type" value="Genomic_DNA"/>
</dbReference>
<dbReference type="RefSeq" id="WP_011830076.1">
    <property type="nucleotide sequence ID" value="NC_008825.1"/>
</dbReference>
<dbReference type="SMR" id="A2SIQ4"/>
<dbReference type="STRING" id="420662.Mpe_A2488"/>
<dbReference type="KEGG" id="mpt:Mpe_A2488"/>
<dbReference type="eggNOG" id="COG0563">
    <property type="taxonomic scope" value="Bacteria"/>
</dbReference>
<dbReference type="HOGENOM" id="CLU_032354_1_2_4"/>
<dbReference type="UniPathway" id="UPA00588">
    <property type="reaction ID" value="UER00649"/>
</dbReference>
<dbReference type="Proteomes" id="UP000000366">
    <property type="component" value="Chromosome"/>
</dbReference>
<dbReference type="GO" id="GO:0005737">
    <property type="term" value="C:cytoplasm"/>
    <property type="evidence" value="ECO:0007669"/>
    <property type="project" value="UniProtKB-SubCell"/>
</dbReference>
<dbReference type="GO" id="GO:0004017">
    <property type="term" value="F:adenylate kinase activity"/>
    <property type="evidence" value="ECO:0007669"/>
    <property type="project" value="UniProtKB-UniRule"/>
</dbReference>
<dbReference type="GO" id="GO:0005524">
    <property type="term" value="F:ATP binding"/>
    <property type="evidence" value="ECO:0007669"/>
    <property type="project" value="UniProtKB-UniRule"/>
</dbReference>
<dbReference type="GO" id="GO:0044209">
    <property type="term" value="P:AMP salvage"/>
    <property type="evidence" value="ECO:0007669"/>
    <property type="project" value="UniProtKB-UniRule"/>
</dbReference>
<dbReference type="CDD" id="cd01428">
    <property type="entry name" value="ADK"/>
    <property type="match status" value="1"/>
</dbReference>
<dbReference type="FunFam" id="3.40.50.300:FF:000106">
    <property type="entry name" value="Adenylate kinase mitochondrial"/>
    <property type="match status" value="1"/>
</dbReference>
<dbReference type="Gene3D" id="3.40.50.300">
    <property type="entry name" value="P-loop containing nucleotide triphosphate hydrolases"/>
    <property type="match status" value="1"/>
</dbReference>
<dbReference type="HAMAP" id="MF_00235">
    <property type="entry name" value="Adenylate_kinase_Adk"/>
    <property type="match status" value="1"/>
</dbReference>
<dbReference type="InterPro" id="IPR006259">
    <property type="entry name" value="Adenyl_kin_sub"/>
</dbReference>
<dbReference type="InterPro" id="IPR000850">
    <property type="entry name" value="Adenylat/UMP-CMP_kin"/>
</dbReference>
<dbReference type="InterPro" id="IPR033690">
    <property type="entry name" value="Adenylat_kinase_CS"/>
</dbReference>
<dbReference type="InterPro" id="IPR007862">
    <property type="entry name" value="Adenylate_kinase_lid-dom"/>
</dbReference>
<dbReference type="InterPro" id="IPR027417">
    <property type="entry name" value="P-loop_NTPase"/>
</dbReference>
<dbReference type="NCBIfam" id="TIGR01351">
    <property type="entry name" value="adk"/>
    <property type="match status" value="1"/>
</dbReference>
<dbReference type="NCBIfam" id="NF001379">
    <property type="entry name" value="PRK00279.1-1"/>
    <property type="match status" value="1"/>
</dbReference>
<dbReference type="NCBIfam" id="NF001380">
    <property type="entry name" value="PRK00279.1-2"/>
    <property type="match status" value="1"/>
</dbReference>
<dbReference type="NCBIfam" id="NF001381">
    <property type="entry name" value="PRK00279.1-3"/>
    <property type="match status" value="1"/>
</dbReference>
<dbReference type="NCBIfam" id="NF011100">
    <property type="entry name" value="PRK14527.1"/>
    <property type="match status" value="1"/>
</dbReference>
<dbReference type="PANTHER" id="PTHR23359">
    <property type="entry name" value="NUCLEOTIDE KINASE"/>
    <property type="match status" value="1"/>
</dbReference>
<dbReference type="Pfam" id="PF00406">
    <property type="entry name" value="ADK"/>
    <property type="match status" value="1"/>
</dbReference>
<dbReference type="Pfam" id="PF05191">
    <property type="entry name" value="ADK_lid"/>
    <property type="match status" value="1"/>
</dbReference>
<dbReference type="PRINTS" id="PR00094">
    <property type="entry name" value="ADENYLTKNASE"/>
</dbReference>
<dbReference type="SUPFAM" id="SSF52540">
    <property type="entry name" value="P-loop containing nucleoside triphosphate hydrolases"/>
    <property type="match status" value="1"/>
</dbReference>
<dbReference type="PROSITE" id="PS00113">
    <property type="entry name" value="ADENYLATE_KINASE"/>
    <property type="match status" value="1"/>
</dbReference>
<protein>
    <recommendedName>
        <fullName evidence="1">Adenylate kinase</fullName>
        <shortName evidence="1">AK</shortName>
        <ecNumber evidence="1">2.7.4.3</ecNumber>
    </recommendedName>
    <alternativeName>
        <fullName evidence="1">ATP-AMP transphosphorylase</fullName>
    </alternativeName>
    <alternativeName>
        <fullName evidence="1">ATP:AMP phosphotransferase</fullName>
    </alternativeName>
    <alternativeName>
        <fullName evidence="1">Adenylate monophosphate kinase</fullName>
    </alternativeName>
</protein>
<proteinExistence type="inferred from homology"/>
<reference key="1">
    <citation type="journal article" date="2007" name="J. Bacteriol.">
        <title>Whole-genome analysis of the methyl tert-butyl ether-degrading beta-proteobacterium Methylibium petroleiphilum PM1.</title>
        <authorList>
            <person name="Kane S.R."/>
            <person name="Chakicherla A.Y."/>
            <person name="Chain P.S.G."/>
            <person name="Schmidt R."/>
            <person name="Shin M.W."/>
            <person name="Legler T.C."/>
            <person name="Scow K.M."/>
            <person name="Larimer F.W."/>
            <person name="Lucas S.M."/>
            <person name="Richardson P.M."/>
            <person name="Hristova K.R."/>
        </authorList>
    </citation>
    <scope>NUCLEOTIDE SEQUENCE [LARGE SCALE GENOMIC DNA]</scope>
    <source>
        <strain>ATCC BAA-1232 / LMG 22953 / PM1</strain>
    </source>
</reference>
<name>KAD_METPP</name>
<keyword id="KW-0067">ATP-binding</keyword>
<keyword id="KW-0963">Cytoplasm</keyword>
<keyword id="KW-0418">Kinase</keyword>
<keyword id="KW-0545">Nucleotide biosynthesis</keyword>
<keyword id="KW-0547">Nucleotide-binding</keyword>
<keyword id="KW-1185">Reference proteome</keyword>
<keyword id="KW-0808">Transferase</keyword>
<organism>
    <name type="scientific">Methylibium petroleiphilum (strain ATCC BAA-1232 / LMG 22953 / PM1)</name>
    <dbReference type="NCBI Taxonomy" id="420662"/>
    <lineage>
        <taxon>Bacteria</taxon>
        <taxon>Pseudomonadati</taxon>
        <taxon>Pseudomonadota</taxon>
        <taxon>Betaproteobacteria</taxon>
        <taxon>Burkholderiales</taxon>
        <taxon>Sphaerotilaceae</taxon>
        <taxon>Methylibium</taxon>
    </lineage>
</organism>
<gene>
    <name evidence="1" type="primary">adk</name>
    <name type="ordered locus">Mpe_A2488</name>
</gene>
<feature type="chain" id="PRO_1000058853" description="Adenylate kinase">
    <location>
        <begin position="1"/>
        <end position="217"/>
    </location>
</feature>
<feature type="region of interest" description="NMP" evidence="1">
    <location>
        <begin position="30"/>
        <end position="59"/>
    </location>
</feature>
<feature type="region of interest" description="LID" evidence="1">
    <location>
        <begin position="122"/>
        <end position="159"/>
    </location>
</feature>
<feature type="binding site" evidence="1">
    <location>
        <begin position="10"/>
        <end position="15"/>
    </location>
    <ligand>
        <name>ATP</name>
        <dbReference type="ChEBI" id="CHEBI:30616"/>
    </ligand>
</feature>
<feature type="binding site" evidence="1">
    <location>
        <position position="31"/>
    </location>
    <ligand>
        <name>AMP</name>
        <dbReference type="ChEBI" id="CHEBI:456215"/>
    </ligand>
</feature>
<feature type="binding site" evidence="1">
    <location>
        <position position="36"/>
    </location>
    <ligand>
        <name>AMP</name>
        <dbReference type="ChEBI" id="CHEBI:456215"/>
    </ligand>
</feature>
<feature type="binding site" evidence="1">
    <location>
        <begin position="57"/>
        <end position="59"/>
    </location>
    <ligand>
        <name>AMP</name>
        <dbReference type="ChEBI" id="CHEBI:456215"/>
    </ligand>
</feature>
<feature type="binding site" evidence="1">
    <location>
        <begin position="85"/>
        <end position="88"/>
    </location>
    <ligand>
        <name>AMP</name>
        <dbReference type="ChEBI" id="CHEBI:456215"/>
    </ligand>
</feature>
<feature type="binding site" evidence="1">
    <location>
        <position position="92"/>
    </location>
    <ligand>
        <name>AMP</name>
        <dbReference type="ChEBI" id="CHEBI:456215"/>
    </ligand>
</feature>
<feature type="binding site" evidence="1">
    <location>
        <position position="123"/>
    </location>
    <ligand>
        <name>ATP</name>
        <dbReference type="ChEBI" id="CHEBI:30616"/>
    </ligand>
</feature>
<feature type="binding site" evidence="1">
    <location>
        <begin position="132"/>
        <end position="133"/>
    </location>
    <ligand>
        <name>ATP</name>
        <dbReference type="ChEBI" id="CHEBI:30616"/>
    </ligand>
</feature>
<feature type="binding site" evidence="1">
    <location>
        <position position="156"/>
    </location>
    <ligand>
        <name>AMP</name>
        <dbReference type="ChEBI" id="CHEBI:456215"/>
    </ligand>
</feature>
<feature type="binding site" evidence="1">
    <location>
        <position position="167"/>
    </location>
    <ligand>
        <name>AMP</name>
        <dbReference type="ChEBI" id="CHEBI:456215"/>
    </ligand>
</feature>
<feature type="binding site" evidence="1">
    <location>
        <position position="203"/>
    </location>
    <ligand>
        <name>ATP</name>
        <dbReference type="ChEBI" id="CHEBI:30616"/>
    </ligand>
</feature>
<comment type="function">
    <text evidence="1">Catalyzes the reversible transfer of the terminal phosphate group between ATP and AMP. Plays an important role in cellular energy homeostasis and in adenine nucleotide metabolism.</text>
</comment>
<comment type="catalytic activity">
    <reaction evidence="1">
        <text>AMP + ATP = 2 ADP</text>
        <dbReference type="Rhea" id="RHEA:12973"/>
        <dbReference type="ChEBI" id="CHEBI:30616"/>
        <dbReference type="ChEBI" id="CHEBI:456215"/>
        <dbReference type="ChEBI" id="CHEBI:456216"/>
        <dbReference type="EC" id="2.7.4.3"/>
    </reaction>
</comment>
<comment type="pathway">
    <text evidence="1">Purine metabolism; AMP biosynthesis via salvage pathway; AMP from ADP: step 1/1.</text>
</comment>
<comment type="subunit">
    <text evidence="1">Monomer.</text>
</comment>
<comment type="subcellular location">
    <subcellularLocation>
        <location evidence="1">Cytoplasm</location>
    </subcellularLocation>
</comment>
<comment type="domain">
    <text evidence="1">Consists of three domains, a large central CORE domain and two small peripheral domains, NMPbind and LID, which undergo movements during catalysis. The LID domain closes over the site of phosphoryl transfer upon ATP binding. Assembling and dissambling the active center during each catalytic cycle provides an effective means to prevent ATP hydrolysis.</text>
</comment>
<comment type="similarity">
    <text evidence="1">Belongs to the adenylate kinase family.</text>
</comment>
<sequence>MKLILLGAPGAGKGTQATFICQKFGIPQISTGDMLRAAVKAGTPLGLEAKKVMDSGGLVSDDIIIGLVKERITQPDCANGFLFDGFPRTIPQADAMKAAGVKLDLVLEIDVPDEAIIERMSGRRVHVASGRTYHVKFNPPKVAGVDDVTGEPLIQRDDDKEATVLKRLQVYQSQTRPLVDYYAAWAATGDAAAPKYRKIAGTGSVDEITTRALAALA</sequence>
<accession>A2SIQ4</accession>
<evidence type="ECO:0000255" key="1">
    <source>
        <dbReference type="HAMAP-Rule" id="MF_00235"/>
    </source>
</evidence>